<evidence type="ECO:0000250" key="1"/>
<evidence type="ECO:0000250" key="2">
    <source>
        <dbReference type="UniProtKB" id="Q9X519"/>
    </source>
</evidence>
<evidence type="ECO:0000305" key="3"/>
<reference key="1">
    <citation type="journal article" date="1993" name="Plant Mol. Biol.">
        <title>Higher-plant cofactor-independent phosphoglyceromutase: purification, molecular characterization and expression.</title>
        <authorList>
            <person name="Huang Y."/>
            <person name="Blakeley S.D."/>
            <person name="McAleese S.M."/>
            <person name="Fothergill-Gilmore L.A."/>
            <person name="Dennis D.T."/>
        </authorList>
    </citation>
    <scope>NUCLEOTIDE SEQUENCE [MRNA]</scope>
    <scope>PROTEIN SEQUENCE OF 1-12</scope>
    <source>
        <strain>cv. Baker 296</strain>
        <tissue>Endosperm</tissue>
    </source>
</reference>
<name>PMGI_RICCO</name>
<accession>P35493</accession>
<proteinExistence type="evidence at protein level"/>
<dbReference type="EC" id="5.4.2.12"/>
<dbReference type="EMBL" id="X70652">
    <property type="protein sequence ID" value="CAA49995.1"/>
    <property type="molecule type" value="mRNA"/>
</dbReference>
<dbReference type="PIR" id="S49647">
    <property type="entry name" value="S49647"/>
</dbReference>
<dbReference type="SMR" id="P35493"/>
<dbReference type="eggNOG" id="KOG4513">
    <property type="taxonomic scope" value="Eukaryota"/>
</dbReference>
<dbReference type="UniPathway" id="UPA00109">
    <property type="reaction ID" value="UER00186"/>
</dbReference>
<dbReference type="GO" id="GO:0005737">
    <property type="term" value="C:cytoplasm"/>
    <property type="evidence" value="ECO:0007669"/>
    <property type="project" value="UniProtKB-SubCell"/>
</dbReference>
<dbReference type="GO" id="GO:0030145">
    <property type="term" value="F:manganese ion binding"/>
    <property type="evidence" value="ECO:0007669"/>
    <property type="project" value="InterPro"/>
</dbReference>
<dbReference type="GO" id="GO:0004619">
    <property type="term" value="F:phosphoglycerate mutase activity"/>
    <property type="evidence" value="ECO:0007669"/>
    <property type="project" value="UniProtKB-EC"/>
</dbReference>
<dbReference type="GO" id="GO:0006007">
    <property type="term" value="P:glucose catabolic process"/>
    <property type="evidence" value="ECO:0007669"/>
    <property type="project" value="InterPro"/>
</dbReference>
<dbReference type="GO" id="GO:0006096">
    <property type="term" value="P:glycolytic process"/>
    <property type="evidence" value="ECO:0007669"/>
    <property type="project" value="UniProtKB-UniPathway"/>
</dbReference>
<dbReference type="CDD" id="cd16010">
    <property type="entry name" value="iPGM"/>
    <property type="match status" value="1"/>
</dbReference>
<dbReference type="FunFam" id="3.40.1450.10:FF:000002">
    <property type="entry name" value="2,3-bisphosphoglycerate-independent phosphoglycerate mutase"/>
    <property type="match status" value="1"/>
</dbReference>
<dbReference type="Gene3D" id="3.40.720.10">
    <property type="entry name" value="Alkaline Phosphatase, subunit A"/>
    <property type="match status" value="1"/>
</dbReference>
<dbReference type="Gene3D" id="3.40.1450.10">
    <property type="entry name" value="BPG-independent phosphoglycerate mutase, domain B"/>
    <property type="match status" value="1"/>
</dbReference>
<dbReference type="InterPro" id="IPR017850">
    <property type="entry name" value="Alkaline_phosphatase_core_sf"/>
</dbReference>
<dbReference type="InterPro" id="IPR011258">
    <property type="entry name" value="BPG-indep_PGM_N"/>
</dbReference>
<dbReference type="InterPro" id="IPR006124">
    <property type="entry name" value="Metalloenzyme"/>
</dbReference>
<dbReference type="InterPro" id="IPR036646">
    <property type="entry name" value="PGAM_B_sf"/>
</dbReference>
<dbReference type="InterPro" id="IPR005995">
    <property type="entry name" value="Pgm_bpd_ind"/>
</dbReference>
<dbReference type="NCBIfam" id="TIGR01307">
    <property type="entry name" value="pgm_bpd_ind"/>
    <property type="match status" value="1"/>
</dbReference>
<dbReference type="PANTHER" id="PTHR31637">
    <property type="entry name" value="2,3-BISPHOSPHOGLYCERATE-INDEPENDENT PHOSPHOGLYCERATE MUTASE"/>
    <property type="match status" value="1"/>
</dbReference>
<dbReference type="PANTHER" id="PTHR31637:SF7">
    <property type="entry name" value="2,3-BISPHOSPHOGLYCERATE-INDEPENDENT PHOSPHOGLYCERATE MUTASE 1"/>
    <property type="match status" value="1"/>
</dbReference>
<dbReference type="Pfam" id="PF06415">
    <property type="entry name" value="iPGM_N"/>
    <property type="match status" value="1"/>
</dbReference>
<dbReference type="Pfam" id="PF01676">
    <property type="entry name" value="Metalloenzyme"/>
    <property type="match status" value="1"/>
</dbReference>
<dbReference type="PIRSF" id="PIRSF001492">
    <property type="entry name" value="IPGAM"/>
    <property type="match status" value="1"/>
</dbReference>
<dbReference type="SUPFAM" id="SSF64158">
    <property type="entry name" value="2,3-Bisphosphoglycerate-independent phosphoglycerate mutase, substrate-binding domain"/>
    <property type="match status" value="1"/>
</dbReference>
<dbReference type="SUPFAM" id="SSF53649">
    <property type="entry name" value="Alkaline phosphatase-like"/>
    <property type="match status" value="1"/>
</dbReference>
<keyword id="KW-0963">Cytoplasm</keyword>
<keyword id="KW-0903">Direct protein sequencing</keyword>
<keyword id="KW-0324">Glycolysis</keyword>
<keyword id="KW-0413">Isomerase</keyword>
<keyword id="KW-0464">Manganese</keyword>
<keyword id="KW-0479">Metal-binding</keyword>
<organism>
    <name type="scientific">Ricinus communis</name>
    <name type="common">Castor bean</name>
    <dbReference type="NCBI Taxonomy" id="3988"/>
    <lineage>
        <taxon>Eukaryota</taxon>
        <taxon>Viridiplantae</taxon>
        <taxon>Streptophyta</taxon>
        <taxon>Embryophyta</taxon>
        <taxon>Tracheophyta</taxon>
        <taxon>Spermatophyta</taxon>
        <taxon>Magnoliopsida</taxon>
        <taxon>eudicotyledons</taxon>
        <taxon>Gunneridae</taxon>
        <taxon>Pentapetalae</taxon>
        <taxon>rosids</taxon>
        <taxon>fabids</taxon>
        <taxon>Malpighiales</taxon>
        <taxon>Euphorbiaceae</taxon>
        <taxon>Acalyphoideae</taxon>
        <taxon>Acalypheae</taxon>
        <taxon>Ricinus</taxon>
    </lineage>
</organism>
<protein>
    <recommendedName>
        <fullName>2,3-bisphosphoglycerate-independent phosphoglycerate mutase</fullName>
        <shortName>BPG-independent PGAM</shortName>
        <shortName>Phosphoglyceromutase</shortName>
        <ecNumber>5.4.2.12</ecNumber>
    </recommendedName>
    <alternativeName>
        <fullName>PGAM-I</fullName>
    </alternativeName>
</protein>
<comment type="function">
    <text evidence="1">Catalyzes the interconversion of 2-phosphoglycerate and 3-phosphoglycerate.</text>
</comment>
<comment type="catalytic activity">
    <reaction>
        <text>(2R)-2-phosphoglycerate = (2R)-3-phosphoglycerate</text>
        <dbReference type="Rhea" id="RHEA:15901"/>
        <dbReference type="ChEBI" id="CHEBI:58272"/>
        <dbReference type="ChEBI" id="CHEBI:58289"/>
        <dbReference type="EC" id="5.4.2.12"/>
    </reaction>
</comment>
<comment type="cofactor">
    <cofactor evidence="1">
        <name>Mn(2+)</name>
        <dbReference type="ChEBI" id="CHEBI:29035"/>
    </cofactor>
    <text evidence="1">Binds 2 manganese ions per subunit.</text>
</comment>
<comment type="pathway">
    <text>Carbohydrate degradation; glycolysis; pyruvate from D-glyceraldehyde 3-phosphate: step 3/5.</text>
</comment>
<comment type="subunit">
    <text>Monomer.</text>
</comment>
<comment type="subcellular location">
    <subcellularLocation>
        <location>Cytoplasm</location>
    </subcellularLocation>
</comment>
<comment type="tissue specificity">
    <text>Found ubiquitously in germinating seed.</text>
</comment>
<comment type="developmental stage">
    <text>Expression most important during germination, it decreases during development.</text>
</comment>
<comment type="similarity">
    <text evidence="3">Belongs to the BPG-independent phosphoglycerate mutase family.</text>
</comment>
<sequence length="556" mass="60818">GEFTWKLADHPKLPKGKTIAMVVLDGWGEAKPDQYNCIHVAETPTMDSFKKTAPERWRLIKAHGTAVGLPTEDDMGNSEVGHNALGAGRIYAQGAKLVDLALASGKIYEGEGFKYVKECFDKGTLHLIGLLSDGGVHSRLDQLQLLLKGAAEHGAKRIRVHVLTDGRDVIDGTSVGFAETLEKDLENLREKGVDAQVASGGGRMYVTMDRYENDWNVVKRGWDAQVLGEAPYKFKSAVEAIKKLREEPKANDQYLPPFVIVDENGKPVGPIVDGDAVVTINFRADRMVMLAKALEYENFDTFDRVRFPKIHYAGMLQYDGELKLPSHYLVSPPEIERTSGEYLVHNGVHTFACSETVKFGHVTFFWNGNRSGYFNPEMEEYVEIPSDVGITFNVQPKMKAIEIAEKARDAILSGKFQQVRVNIPNGDMVGHTGDVEATVVGCKAADEAVKMIIDAIEQVGGIYVVTADHGNAEDMVKRDKSGKPMADKSGKIQILTSHTLQPVPIAIGGPGLTPGVRFRSDIPTGGLANVAATVMNLHGFEAPSDYEPTLIEAVDN</sequence>
<feature type="chain" id="PRO_0000212113" description="2,3-bisphosphoglycerate-independent phosphoglycerate mutase">
    <location>
        <begin position="1"/>
        <end position="556"/>
    </location>
</feature>
<feature type="active site" description="Phosphoserine intermediate" evidence="2">
    <location>
        <position position="78"/>
    </location>
</feature>
<feature type="binding site" evidence="2">
    <location>
        <position position="25"/>
    </location>
    <ligand>
        <name>Mn(2+)</name>
        <dbReference type="ChEBI" id="CHEBI:29035"/>
        <label>2</label>
    </ligand>
</feature>
<feature type="binding site" evidence="2">
    <location>
        <position position="78"/>
    </location>
    <ligand>
        <name>Mn(2+)</name>
        <dbReference type="ChEBI" id="CHEBI:29035"/>
        <label>2</label>
    </ligand>
</feature>
<feature type="binding site" evidence="2">
    <location>
        <position position="137"/>
    </location>
    <ligand>
        <name>substrate</name>
    </ligand>
</feature>
<feature type="binding site" evidence="2">
    <location>
        <begin position="167"/>
        <end position="168"/>
    </location>
    <ligand>
        <name>substrate</name>
    </ligand>
</feature>
<feature type="binding site" evidence="2">
    <location>
        <position position="203"/>
    </location>
    <ligand>
        <name>substrate</name>
    </ligand>
</feature>
<feature type="binding site" evidence="2">
    <location>
        <position position="210"/>
    </location>
    <ligand>
        <name>substrate</name>
    </ligand>
</feature>
<feature type="binding site" evidence="2">
    <location>
        <begin position="283"/>
        <end position="286"/>
    </location>
    <ligand>
        <name>substrate</name>
    </ligand>
</feature>
<feature type="binding site" evidence="2">
    <location>
        <position position="358"/>
    </location>
    <ligand>
        <name>substrate</name>
    </ligand>
</feature>
<feature type="binding site" evidence="2">
    <location>
        <position position="427"/>
    </location>
    <ligand>
        <name>Mn(2+)</name>
        <dbReference type="ChEBI" id="CHEBI:29035"/>
        <label>1</label>
    </ligand>
</feature>
<feature type="binding site" evidence="2">
    <location>
        <position position="431"/>
    </location>
    <ligand>
        <name>Mn(2+)</name>
        <dbReference type="ChEBI" id="CHEBI:29035"/>
        <label>1</label>
    </ligand>
</feature>
<feature type="binding site" evidence="2">
    <location>
        <position position="468"/>
    </location>
    <ligand>
        <name>Mn(2+)</name>
        <dbReference type="ChEBI" id="CHEBI:29035"/>
        <label>2</label>
    </ligand>
</feature>
<feature type="binding site" evidence="2">
    <location>
        <position position="469"/>
    </location>
    <ligand>
        <name>Mn(2+)</name>
        <dbReference type="ChEBI" id="CHEBI:29035"/>
        <label>2</label>
    </ligand>
</feature>
<feature type="binding site" evidence="2">
    <location>
        <position position="498"/>
    </location>
    <ligand>
        <name>Mn(2+)</name>
        <dbReference type="ChEBI" id="CHEBI:29035"/>
        <label>1</label>
    </ligand>
</feature>